<sequence length="203" mass="23308">MRLWLIRHGETQANIDGLYSGHAPTPLTARGIEQAQNLHTLLHGVSFDLVLCSELERAQHTARLVLSDRQLPVQIIPELNEMFFGDWEMRHHRDLMQEDAENYSAWCNDWQHAIPTNGEGFQAFSQRVERFIARLSEFQHYQNILVVSHQGVLSLLIARLIGMPAEAMWHFRVDQGCWSAIDINQKFATLRVLNSRAIGVENA</sequence>
<accession>P52086</accession>
<accession>P77109</accession>
<feature type="chain" id="PRO_0000179954" description="Adenosylcobalamin/alpha-ribazole phosphatase">
    <location>
        <begin position="1"/>
        <end position="203"/>
    </location>
</feature>
<feature type="active site" description="Tele-phosphohistidine intermediate" evidence="2">
    <location>
        <position position="8"/>
    </location>
</feature>
<feature type="active site" description="Proton donor/acceptor" evidence="2">
    <location>
        <position position="81"/>
    </location>
</feature>
<feature type="strand" evidence="4">
    <location>
        <begin position="1"/>
        <end position="7"/>
    </location>
</feature>
<feature type="helix" evidence="4">
    <location>
        <begin position="12"/>
        <end position="16"/>
    </location>
</feature>
<feature type="strand" evidence="4">
    <location>
        <begin position="21"/>
        <end position="23"/>
    </location>
</feature>
<feature type="helix" evidence="4">
    <location>
        <begin position="29"/>
        <end position="41"/>
    </location>
</feature>
<feature type="turn" evidence="4">
    <location>
        <begin position="42"/>
        <end position="44"/>
    </location>
</feature>
<feature type="strand" evidence="4">
    <location>
        <begin position="48"/>
        <end position="52"/>
    </location>
</feature>
<feature type="helix" evidence="4">
    <location>
        <begin position="56"/>
        <end position="65"/>
    </location>
</feature>
<feature type="strand" evidence="4">
    <location>
        <begin position="67"/>
        <end position="69"/>
    </location>
</feature>
<feature type="strand" evidence="4">
    <location>
        <begin position="73"/>
        <end position="75"/>
    </location>
</feature>
<feature type="helix" evidence="4">
    <location>
        <begin position="77"/>
        <end position="79"/>
    </location>
</feature>
<feature type="helix" evidence="4">
    <location>
        <begin position="85"/>
        <end position="87"/>
    </location>
</feature>
<feature type="helix" evidence="4">
    <location>
        <begin position="92"/>
        <end position="98"/>
    </location>
</feature>
<feature type="helix" evidence="4">
    <location>
        <begin position="100"/>
        <end position="108"/>
    </location>
</feature>
<feature type="turn" evidence="4">
    <location>
        <begin position="110"/>
        <end position="112"/>
    </location>
</feature>
<feature type="helix" evidence="4">
    <location>
        <begin position="121"/>
        <end position="133"/>
    </location>
</feature>
<feature type="helix" evidence="4">
    <location>
        <begin position="134"/>
        <end position="138"/>
    </location>
</feature>
<feature type="strand" evidence="4">
    <location>
        <begin position="142"/>
        <end position="148"/>
    </location>
</feature>
<feature type="helix" evidence="4">
    <location>
        <begin position="150"/>
        <end position="160"/>
    </location>
</feature>
<feature type="helix" evidence="4">
    <location>
        <begin position="165"/>
        <end position="170"/>
    </location>
</feature>
<feature type="strand" evidence="4">
    <location>
        <begin position="178"/>
        <end position="184"/>
    </location>
</feature>
<feature type="strand" evidence="4">
    <location>
        <begin position="187"/>
        <end position="195"/>
    </location>
</feature>
<comment type="function">
    <text evidence="1">Catalyzes the conversion of adenosylcobalamin 5'-phosphate to adenosylcobalamin (vitamin B12); involved in the assembly of the nucleotide loop of cobalamin. Also catalyzes the hydrolysis of the phospho group from alpha-ribazole 5'-phosphate to form alpha-ribazole.</text>
</comment>
<comment type="catalytic activity">
    <reaction evidence="1">
        <text>adenosylcob(III)alamin 5'-phosphate + H2O = adenosylcob(III)alamin + phosphate</text>
        <dbReference type="Rhea" id="RHEA:30367"/>
        <dbReference type="ChEBI" id="CHEBI:15377"/>
        <dbReference type="ChEBI" id="CHEBI:18408"/>
        <dbReference type="ChEBI" id="CHEBI:43474"/>
        <dbReference type="ChEBI" id="CHEBI:60493"/>
        <dbReference type="EC" id="3.1.3.73"/>
    </reaction>
</comment>
<comment type="catalytic activity">
    <reaction evidence="1">
        <text>alpha-ribazole 5'-phosphate + H2O = alpha-ribazole + phosphate</text>
        <dbReference type="Rhea" id="RHEA:24456"/>
        <dbReference type="ChEBI" id="CHEBI:10329"/>
        <dbReference type="ChEBI" id="CHEBI:15377"/>
        <dbReference type="ChEBI" id="CHEBI:43474"/>
        <dbReference type="ChEBI" id="CHEBI:57918"/>
        <dbReference type="EC" id="3.1.3.73"/>
    </reaction>
</comment>
<comment type="pathway">
    <text>Nucleoside biosynthesis; alpha-ribazole biosynthesis; alpha-ribazole from 5,6-dimethylbenzimidazole: step 2/2.</text>
</comment>
<comment type="similarity">
    <text evidence="3">Belongs to the phosphoglycerate mutase family.</text>
</comment>
<comment type="sequence caution" evidence="3">
    <conflict type="erroneous initiation">
        <sequence resource="EMBL-CDS" id="AAB40839"/>
    </conflict>
    <text>Extended N-terminus.</text>
</comment>
<proteinExistence type="evidence at protein level"/>
<evidence type="ECO:0000250" key="1">
    <source>
        <dbReference type="UniProtKB" id="P39701"/>
    </source>
</evidence>
<evidence type="ECO:0000250" key="2">
    <source>
        <dbReference type="UniProtKB" id="P62707"/>
    </source>
</evidence>
<evidence type="ECO:0000305" key="3"/>
<evidence type="ECO:0007829" key="4">
    <source>
        <dbReference type="PDB" id="6E4B"/>
    </source>
</evidence>
<reference key="1">
    <citation type="submission" date="1995-04" db="EMBL/GenBank/DDBJ databases">
        <authorList>
            <person name="Addinall S.G."/>
            <person name="Donachie W.D."/>
        </authorList>
    </citation>
    <scope>NUCLEOTIDE SEQUENCE [GENOMIC DNA]</scope>
    <source>
        <strain>K12 / W3110 / ATCC 27325 / DSM 5911</strain>
    </source>
</reference>
<reference key="2">
    <citation type="journal article" date="1996" name="DNA Res.">
        <title>A 718-kb DNA sequence of the Escherichia coli K-12 genome corresponding to the 12.7-28.0 min region on the linkage map.</title>
        <authorList>
            <person name="Oshima T."/>
            <person name="Aiba H."/>
            <person name="Baba T."/>
            <person name="Fujita K."/>
            <person name="Hayashi K."/>
            <person name="Honjo A."/>
            <person name="Ikemoto K."/>
            <person name="Inada T."/>
            <person name="Itoh T."/>
            <person name="Kajihara M."/>
            <person name="Kanai K."/>
            <person name="Kashimoto K."/>
            <person name="Kimura S."/>
            <person name="Kitagawa M."/>
            <person name="Makino K."/>
            <person name="Masuda S."/>
            <person name="Miki T."/>
            <person name="Mizobuchi K."/>
            <person name="Mori H."/>
            <person name="Motomura K."/>
            <person name="Nakamura Y."/>
            <person name="Nashimoto H."/>
            <person name="Nishio Y."/>
            <person name="Saito N."/>
            <person name="Sampei G."/>
            <person name="Seki Y."/>
            <person name="Tagami H."/>
            <person name="Takemoto K."/>
            <person name="Wada C."/>
            <person name="Yamamoto Y."/>
            <person name="Yano M."/>
            <person name="Horiuchi T."/>
        </authorList>
    </citation>
    <scope>NUCLEOTIDE SEQUENCE [LARGE SCALE GENOMIC DNA]</scope>
    <source>
        <strain>K12 / W3110 / ATCC 27325 / DSM 5911</strain>
    </source>
</reference>
<reference key="3">
    <citation type="submission" date="1997-01" db="EMBL/GenBank/DDBJ databases">
        <title>Sequence of minutes 4-25 of Escherichia coli.</title>
        <authorList>
            <person name="Chung E."/>
            <person name="Allen E."/>
            <person name="Araujo R."/>
            <person name="Aparicio A.M."/>
            <person name="Davis K."/>
            <person name="Duncan M."/>
            <person name="Federspiel N."/>
            <person name="Hyman R."/>
            <person name="Kalman S."/>
            <person name="Komp C."/>
            <person name="Kurdi O."/>
            <person name="Lew H."/>
            <person name="Lin D."/>
            <person name="Namath A."/>
            <person name="Oefner P."/>
            <person name="Roberts D."/>
            <person name="Schramm S."/>
            <person name="Davis R.W."/>
        </authorList>
    </citation>
    <scope>NUCLEOTIDE SEQUENCE [LARGE SCALE GENOMIC DNA]</scope>
    <source>
        <strain>K12 / MG1655 / ATCC 47076</strain>
    </source>
</reference>
<reference key="4">
    <citation type="journal article" date="1997" name="Science">
        <title>The complete genome sequence of Escherichia coli K-12.</title>
        <authorList>
            <person name="Blattner F.R."/>
            <person name="Plunkett G. III"/>
            <person name="Bloch C.A."/>
            <person name="Perna N.T."/>
            <person name="Burland V."/>
            <person name="Riley M."/>
            <person name="Collado-Vides J."/>
            <person name="Glasner J.D."/>
            <person name="Rode C.K."/>
            <person name="Mayhew G.F."/>
            <person name="Gregor J."/>
            <person name="Davis N.W."/>
            <person name="Kirkpatrick H.A."/>
            <person name="Goeden M.A."/>
            <person name="Rose D.J."/>
            <person name="Mau B."/>
            <person name="Shao Y."/>
        </authorList>
    </citation>
    <scope>NUCLEOTIDE SEQUENCE [LARGE SCALE GENOMIC DNA]</scope>
    <source>
        <strain>K12 / MG1655 / ATCC 47076</strain>
    </source>
</reference>
<reference key="5">
    <citation type="journal article" date="2006" name="Mol. Syst. Biol.">
        <title>Highly accurate genome sequences of Escherichia coli K-12 strains MG1655 and W3110.</title>
        <authorList>
            <person name="Hayashi K."/>
            <person name="Morooka N."/>
            <person name="Yamamoto Y."/>
            <person name="Fujita K."/>
            <person name="Isono K."/>
            <person name="Choi S."/>
            <person name="Ohtsubo E."/>
            <person name="Baba T."/>
            <person name="Wanner B.L."/>
            <person name="Mori H."/>
            <person name="Horiuchi T."/>
        </authorList>
    </citation>
    <scope>NUCLEOTIDE SEQUENCE [LARGE SCALE GENOMIC DNA]</scope>
    <source>
        <strain>K12 / W3110 / ATCC 27325 / DSM 5911</strain>
    </source>
</reference>
<dbReference type="EC" id="3.1.3.73" evidence="1"/>
<dbReference type="EMBL" id="U23163">
    <property type="protein sequence ID" value="AAA64853.1"/>
    <property type="molecule type" value="Genomic_DNA"/>
</dbReference>
<dbReference type="EMBL" id="U82598">
    <property type="protein sequence ID" value="AAB40839.1"/>
    <property type="status" value="ALT_INIT"/>
    <property type="molecule type" value="Genomic_DNA"/>
</dbReference>
<dbReference type="EMBL" id="U00096">
    <property type="protein sequence ID" value="AAC73739.1"/>
    <property type="molecule type" value="Genomic_DNA"/>
</dbReference>
<dbReference type="EMBL" id="AP009048">
    <property type="protein sequence ID" value="BAA35285.1"/>
    <property type="molecule type" value="Genomic_DNA"/>
</dbReference>
<dbReference type="PIR" id="D64798">
    <property type="entry name" value="D64798"/>
</dbReference>
<dbReference type="RefSeq" id="NP_415171.1">
    <property type="nucleotide sequence ID" value="NC_000913.3"/>
</dbReference>
<dbReference type="RefSeq" id="WP_001241872.1">
    <property type="nucleotide sequence ID" value="NZ_LN832404.1"/>
</dbReference>
<dbReference type="PDB" id="6E4B">
    <property type="method" value="X-ray"/>
    <property type="resolution" value="2.55 A"/>
    <property type="chains" value="A/B/C/D=1-203"/>
</dbReference>
<dbReference type="PDBsum" id="6E4B"/>
<dbReference type="SMR" id="P52086"/>
<dbReference type="BioGRID" id="4259909">
    <property type="interactions" value="3"/>
</dbReference>
<dbReference type="FunCoup" id="P52086">
    <property type="interactions" value="617"/>
</dbReference>
<dbReference type="IntAct" id="P52086">
    <property type="interactions" value="3"/>
</dbReference>
<dbReference type="STRING" id="511145.b0638"/>
<dbReference type="PaxDb" id="511145-b0638"/>
<dbReference type="EnsemblBacteria" id="AAC73739">
    <property type="protein sequence ID" value="AAC73739"/>
    <property type="gene ID" value="b0638"/>
</dbReference>
<dbReference type="GeneID" id="945246"/>
<dbReference type="KEGG" id="ecj:JW0633"/>
<dbReference type="KEGG" id="eco:b0638"/>
<dbReference type="KEGG" id="ecoc:C3026_03190"/>
<dbReference type="PATRIC" id="fig|1411691.4.peg.1630"/>
<dbReference type="EchoBASE" id="EB3029"/>
<dbReference type="eggNOG" id="COG0406">
    <property type="taxonomic scope" value="Bacteria"/>
</dbReference>
<dbReference type="HOGENOM" id="CLU_033323_8_4_6"/>
<dbReference type="InParanoid" id="P52086"/>
<dbReference type="OMA" id="WLTEPAW"/>
<dbReference type="OrthoDB" id="9781415at2"/>
<dbReference type="PhylomeDB" id="P52086"/>
<dbReference type="BioCyc" id="EcoCyc:RIBAZOLEPHOSPHAT-MONOMER"/>
<dbReference type="BioCyc" id="MetaCyc:RIBAZOLEPHOSPHAT-MONOMER"/>
<dbReference type="UniPathway" id="UPA00061">
    <property type="reaction ID" value="UER00517"/>
</dbReference>
<dbReference type="PRO" id="PR:P52086"/>
<dbReference type="Proteomes" id="UP000000625">
    <property type="component" value="Chromosome"/>
</dbReference>
<dbReference type="GO" id="GO:0005737">
    <property type="term" value="C:cytoplasm"/>
    <property type="evidence" value="ECO:0000318"/>
    <property type="project" value="GO_Central"/>
</dbReference>
<dbReference type="GO" id="GO:0043755">
    <property type="term" value="F:alpha-ribazole phosphatase activity"/>
    <property type="evidence" value="ECO:0007669"/>
    <property type="project" value="UniProtKB-EC"/>
</dbReference>
<dbReference type="GO" id="GO:0016791">
    <property type="term" value="F:phosphatase activity"/>
    <property type="evidence" value="ECO:0000318"/>
    <property type="project" value="GO_Central"/>
</dbReference>
<dbReference type="GO" id="GO:0009236">
    <property type="term" value="P:cobalamin biosynthetic process"/>
    <property type="evidence" value="ECO:0007669"/>
    <property type="project" value="UniProtKB-KW"/>
</dbReference>
<dbReference type="CDD" id="cd07067">
    <property type="entry name" value="HP_PGM_like"/>
    <property type="match status" value="1"/>
</dbReference>
<dbReference type="Gene3D" id="3.40.50.1240">
    <property type="entry name" value="Phosphoglycerate mutase-like"/>
    <property type="match status" value="1"/>
</dbReference>
<dbReference type="InterPro" id="IPR013078">
    <property type="entry name" value="His_Pase_superF_clade-1"/>
</dbReference>
<dbReference type="InterPro" id="IPR029033">
    <property type="entry name" value="His_PPase_superfam"/>
</dbReference>
<dbReference type="InterPro" id="IPR001345">
    <property type="entry name" value="PG/BPGM_mutase_AS"/>
</dbReference>
<dbReference type="InterPro" id="IPR050275">
    <property type="entry name" value="PGM_Phosphatase"/>
</dbReference>
<dbReference type="InterPro" id="IPR017578">
    <property type="entry name" value="Ribazole_CobC"/>
</dbReference>
<dbReference type="NCBIfam" id="NF011580">
    <property type="entry name" value="PRK15004.1"/>
    <property type="match status" value="1"/>
</dbReference>
<dbReference type="NCBIfam" id="TIGR03162">
    <property type="entry name" value="ribazole_cobC"/>
    <property type="match status" value="1"/>
</dbReference>
<dbReference type="PANTHER" id="PTHR48100:SF59">
    <property type="entry name" value="ADENOSYLCOBALAMIN_ALPHA-RIBAZOLE PHOSPHATASE"/>
    <property type="match status" value="1"/>
</dbReference>
<dbReference type="PANTHER" id="PTHR48100">
    <property type="entry name" value="BROAD-SPECIFICITY PHOSPHATASE YOR283W-RELATED"/>
    <property type="match status" value="1"/>
</dbReference>
<dbReference type="Pfam" id="PF00300">
    <property type="entry name" value="His_Phos_1"/>
    <property type="match status" value="1"/>
</dbReference>
<dbReference type="PIRSF" id="PIRSF000709">
    <property type="entry name" value="6PFK_2-Ptase"/>
    <property type="match status" value="1"/>
</dbReference>
<dbReference type="SMART" id="SM00855">
    <property type="entry name" value="PGAM"/>
    <property type="match status" value="1"/>
</dbReference>
<dbReference type="SUPFAM" id="SSF53254">
    <property type="entry name" value="Phosphoglycerate mutase-like"/>
    <property type="match status" value="1"/>
</dbReference>
<dbReference type="PROSITE" id="PS00175">
    <property type="entry name" value="PG_MUTASE"/>
    <property type="match status" value="1"/>
</dbReference>
<name>COBC_ECOLI</name>
<organism>
    <name type="scientific">Escherichia coli (strain K12)</name>
    <dbReference type="NCBI Taxonomy" id="83333"/>
    <lineage>
        <taxon>Bacteria</taxon>
        <taxon>Pseudomonadati</taxon>
        <taxon>Pseudomonadota</taxon>
        <taxon>Gammaproteobacteria</taxon>
        <taxon>Enterobacterales</taxon>
        <taxon>Enterobacteriaceae</taxon>
        <taxon>Escherichia</taxon>
    </lineage>
</organism>
<protein>
    <recommendedName>
        <fullName>Adenosylcobalamin/alpha-ribazole phosphatase</fullName>
        <ecNumber evidence="1">3.1.3.73</ecNumber>
    </recommendedName>
    <alternativeName>
        <fullName>Adenosylcobalamin phosphatase</fullName>
    </alternativeName>
    <alternativeName>
        <fullName>Alpha-ribazole-5'-phosphate phosphatase</fullName>
    </alternativeName>
</protein>
<keyword id="KW-0002">3D-structure</keyword>
<keyword id="KW-0169">Cobalamin biosynthesis</keyword>
<keyword id="KW-0378">Hydrolase</keyword>
<keyword id="KW-1185">Reference proteome</keyword>
<gene>
    <name type="primary">cobC</name>
    <name type="synonym">phpB</name>
    <name type="ordered locus">b0638</name>
    <name type="ordered locus">JW0633</name>
</gene>